<comment type="function">
    <text evidence="1">Cationic host defense peptide that have antibacterial activity by breaking membranes. Is more effective on Gram-positive than on Gram-negative bacteria.</text>
</comment>
<comment type="subcellular location">
    <subcellularLocation>
        <location evidence="1">Secreted</location>
    </subcellularLocation>
    <subcellularLocation>
        <location evidence="1">Target cell membrane</location>
    </subcellularLocation>
    <text evidence="1">Forms a helical membrane channel in the prey.</text>
</comment>
<comment type="tissue specificity">
    <text evidence="3">Expressed by the venom gland.</text>
</comment>
<comment type="similarity">
    <text evidence="3">Belongs to the non-disulfide-bridged peptide (NDBP) superfamily. Short antimicrobial peptide (group 4) family.</text>
</comment>
<sequence>MKVNVLLAVFLVVMVVTDHCHALFGLIPSMMGGLVSAFKGRRKLQMEARFQPQNKNYRKRELDLENLFTHMPDY</sequence>
<proteinExistence type="inferred from homology"/>
<reference key="1">
    <citation type="journal article" date="2010" name="BMC Genomics">
        <title>Comparative venom gland transcriptome analysis of the scorpion Lychas mucronatus reveals intraspecific toxic gene diversity and new venomous components.</title>
        <authorList>
            <person name="Zhao R."/>
            <person name="Ma Y."/>
            <person name="He Y."/>
            <person name="Di Z."/>
            <person name="Wu Y.-L."/>
            <person name="Cao Z.-J."/>
            <person name="Li W.-X."/>
        </authorList>
    </citation>
    <scope>NUCLEOTIDE SEQUENCE [MRNA]</scope>
    <source>
        <strain>Yunnan</strain>
        <tissue>Venom gland</tissue>
    </source>
</reference>
<protein>
    <recommendedName>
        <fullName>Antimicrobial peptide 36.4</fullName>
    </recommendedName>
</protein>
<name>NDB4U_LYCMC</name>
<feature type="signal peptide" evidence="2">
    <location>
        <begin position="1"/>
        <end position="22"/>
    </location>
</feature>
<feature type="peptide" id="PRO_0000403860" description="Antimicrobial peptide 36.4">
    <location>
        <begin position="23"/>
        <end position="39"/>
    </location>
</feature>
<feature type="propeptide" id="PRO_0000403861" evidence="1">
    <location>
        <begin position="44"/>
        <end position="74"/>
    </location>
</feature>
<feature type="modified residue" description="Lysine amide" evidence="1">
    <location>
        <position position="39"/>
    </location>
</feature>
<keyword id="KW-0027">Amidation</keyword>
<keyword id="KW-0044">Antibiotic</keyword>
<keyword id="KW-0929">Antimicrobial</keyword>
<keyword id="KW-0165">Cleavage on pair of basic residues</keyword>
<keyword id="KW-0472">Membrane</keyword>
<keyword id="KW-0964">Secreted</keyword>
<keyword id="KW-0732">Signal</keyword>
<keyword id="KW-1052">Target cell membrane</keyword>
<keyword id="KW-1053">Target membrane</keyword>
<keyword id="KW-0812">Transmembrane</keyword>
<organism>
    <name type="scientific">Lychas mucronatus</name>
    <name type="common">Chinese swimming scorpion</name>
    <dbReference type="NCBI Taxonomy" id="172552"/>
    <lineage>
        <taxon>Eukaryota</taxon>
        <taxon>Metazoa</taxon>
        <taxon>Ecdysozoa</taxon>
        <taxon>Arthropoda</taxon>
        <taxon>Chelicerata</taxon>
        <taxon>Arachnida</taxon>
        <taxon>Scorpiones</taxon>
        <taxon>Buthida</taxon>
        <taxon>Buthoidea</taxon>
        <taxon>Buthidae</taxon>
        <taxon>Lychas</taxon>
    </lineage>
</organism>
<accession>P0CI89</accession>
<dbReference type="EMBL" id="GT028840">
    <property type="status" value="NOT_ANNOTATED_CDS"/>
    <property type="molecule type" value="mRNA"/>
</dbReference>
<dbReference type="SMR" id="P0CI89"/>
<dbReference type="GO" id="GO:0005576">
    <property type="term" value="C:extracellular region"/>
    <property type="evidence" value="ECO:0007669"/>
    <property type="project" value="UniProtKB-SubCell"/>
</dbReference>
<dbReference type="GO" id="GO:0016020">
    <property type="term" value="C:membrane"/>
    <property type="evidence" value="ECO:0007669"/>
    <property type="project" value="UniProtKB-KW"/>
</dbReference>
<dbReference type="GO" id="GO:0044218">
    <property type="term" value="C:other organism cell membrane"/>
    <property type="evidence" value="ECO:0007669"/>
    <property type="project" value="UniProtKB-KW"/>
</dbReference>
<dbReference type="GO" id="GO:0042742">
    <property type="term" value="P:defense response to bacterium"/>
    <property type="evidence" value="ECO:0007669"/>
    <property type="project" value="UniProtKB-KW"/>
</dbReference>
<evidence type="ECO:0000250" key="1"/>
<evidence type="ECO:0000255" key="2"/>
<evidence type="ECO:0000305" key="3"/>